<protein>
    <recommendedName>
        <fullName>Inter-alpha-trypsin inhibitor heavy chain H1</fullName>
        <shortName>ITI heavy chain H1</shortName>
        <shortName>ITI-HC1</shortName>
        <shortName>Inter-alpha-inhibitor heavy chain 1</shortName>
    </recommendedName>
</protein>
<proteinExistence type="evidence at protein level"/>
<feature type="signal peptide" evidence="3">
    <location>
        <begin position="1"/>
        <end position="22"/>
    </location>
</feature>
<feature type="propeptide" id="PRO_0000285681" evidence="1">
    <location>
        <begin position="23"/>
        <end position="29"/>
    </location>
</feature>
<feature type="chain" id="PRO_0000285682" description="Inter-alpha-trypsin inhibitor heavy chain H1">
    <location>
        <begin position="30"/>
        <end position="667"/>
    </location>
</feature>
<feature type="propeptide" id="PRO_0000285683" evidence="1">
    <location>
        <begin position="668"/>
        <end position="906"/>
    </location>
</feature>
<feature type="domain" description="VIT" evidence="5">
    <location>
        <begin position="32"/>
        <end position="161"/>
    </location>
</feature>
<feature type="domain" description="VWFA" evidence="4">
    <location>
        <begin position="287"/>
        <end position="470"/>
    </location>
</feature>
<feature type="modified residue" description="Phosphoserine" evidence="2">
    <location>
        <position position="124"/>
    </location>
</feature>
<feature type="modified residue" description="Phosphothreonine" evidence="2">
    <location>
        <position position="397"/>
    </location>
</feature>
<feature type="modified residue" description="Phosphothreonine" evidence="2">
    <location>
        <position position="402"/>
    </location>
</feature>
<feature type="modified residue" description="Aspartate 1-(chondroitin 4-sulfate)-ester" evidence="1">
    <location>
        <position position="667"/>
    </location>
</feature>
<feature type="glycosylation site" description="S-linked (Hex...) cysteine" evidence="2">
    <location>
        <position position="55"/>
    </location>
</feature>
<feature type="glycosylation site" description="N-linked (GlcNAc...) asparagine" evidence="3">
    <location>
        <position position="583"/>
    </location>
</feature>
<feature type="glycosylation site" description="O-linked (GalNAc...) serine" evidence="6">
    <location>
        <position position="643"/>
    </location>
</feature>
<feature type="glycosylation site" description="O-linked (GalNAc...) threonine" evidence="6">
    <location>
        <position position="648"/>
    </location>
</feature>
<feature type="glycosylation site" description="N-linked (GlcNAc...) asparagine" evidence="3">
    <location>
        <position position="745"/>
    </location>
</feature>
<organism>
    <name type="scientific">Bos taurus</name>
    <name type="common">Bovine</name>
    <dbReference type="NCBI Taxonomy" id="9913"/>
    <lineage>
        <taxon>Eukaryota</taxon>
        <taxon>Metazoa</taxon>
        <taxon>Chordata</taxon>
        <taxon>Craniata</taxon>
        <taxon>Vertebrata</taxon>
        <taxon>Euteleostomi</taxon>
        <taxon>Mammalia</taxon>
        <taxon>Eutheria</taxon>
        <taxon>Laurasiatheria</taxon>
        <taxon>Artiodactyla</taxon>
        <taxon>Ruminantia</taxon>
        <taxon>Pecora</taxon>
        <taxon>Bovidae</taxon>
        <taxon>Bovinae</taxon>
        <taxon>Bos</taxon>
    </lineage>
</organism>
<keyword id="KW-0325">Glycoprotein</keyword>
<keyword id="KW-0597">Phosphoprotein</keyword>
<keyword id="KW-0646">Protease inhibitor</keyword>
<keyword id="KW-0654">Proteoglycan</keyword>
<keyword id="KW-1185">Reference proteome</keyword>
<keyword id="KW-0964">Secreted</keyword>
<keyword id="KW-0722">Serine protease inhibitor</keyword>
<keyword id="KW-0732">Signal</keyword>
<dbReference type="EMBL" id="BC120096">
    <property type="protein sequence ID" value="AAI20097.1"/>
    <property type="molecule type" value="mRNA"/>
</dbReference>
<dbReference type="RefSeq" id="NP_001068821.1">
    <property type="nucleotide sequence ID" value="NM_001075353.2"/>
</dbReference>
<dbReference type="SMR" id="Q0VCM5"/>
<dbReference type="FunCoup" id="Q0VCM5">
    <property type="interactions" value="198"/>
</dbReference>
<dbReference type="STRING" id="9913.ENSBTAP00000010318"/>
<dbReference type="GlyConnect" id="708">
    <property type="glycosylation" value="2 O-Linked glycans (2 sites)"/>
</dbReference>
<dbReference type="GlyCosmos" id="Q0VCM5">
    <property type="glycosylation" value="5 sites, 1 glycan"/>
</dbReference>
<dbReference type="GlyGen" id="Q0VCM5">
    <property type="glycosylation" value="5 sites, 1 O-linked glycan (1 site)"/>
</dbReference>
<dbReference type="iPTMnet" id="Q0VCM5"/>
<dbReference type="PaxDb" id="9913-ENSBTAP00000010318"/>
<dbReference type="PeptideAtlas" id="Q0VCM5"/>
<dbReference type="GeneID" id="508356"/>
<dbReference type="KEGG" id="bta:508356"/>
<dbReference type="CTD" id="3697"/>
<dbReference type="VEuPathDB" id="HostDB:ENSBTAG00000007843"/>
<dbReference type="eggNOG" id="ENOG502RXR2">
    <property type="taxonomic scope" value="Eukaryota"/>
</dbReference>
<dbReference type="InParanoid" id="Q0VCM5"/>
<dbReference type="OMA" id="QEFRTTC"/>
<dbReference type="OrthoDB" id="299997at2759"/>
<dbReference type="Proteomes" id="UP000009136">
    <property type="component" value="Chromosome 22"/>
</dbReference>
<dbReference type="Bgee" id="ENSBTAG00000007843">
    <property type="expression patterns" value="Expressed in liver and 39 other cell types or tissues"/>
</dbReference>
<dbReference type="GO" id="GO:0005576">
    <property type="term" value="C:extracellular region"/>
    <property type="evidence" value="ECO:0007669"/>
    <property type="project" value="UniProtKB-SubCell"/>
</dbReference>
<dbReference type="GO" id="GO:0004867">
    <property type="term" value="F:serine-type endopeptidase inhibitor activity"/>
    <property type="evidence" value="ECO:0007669"/>
    <property type="project" value="UniProtKB-KW"/>
</dbReference>
<dbReference type="GO" id="GO:0030212">
    <property type="term" value="P:hyaluronan metabolic process"/>
    <property type="evidence" value="ECO:0007669"/>
    <property type="project" value="InterPro"/>
</dbReference>
<dbReference type="CDD" id="cd01461">
    <property type="entry name" value="vWA_interalpha_trypsin_inhibitor"/>
    <property type="match status" value="1"/>
</dbReference>
<dbReference type="FunFam" id="3.40.50.410:FF:000013">
    <property type="entry name" value="inter-alpha-trypsin inhibitor heavy chain H2"/>
    <property type="match status" value="1"/>
</dbReference>
<dbReference type="Gene3D" id="3.40.50.410">
    <property type="entry name" value="von Willebrand factor, type A domain"/>
    <property type="match status" value="1"/>
</dbReference>
<dbReference type="InterPro" id="IPR010600">
    <property type="entry name" value="ITI_HC_C"/>
</dbReference>
<dbReference type="InterPro" id="IPR050934">
    <property type="entry name" value="ITIH"/>
</dbReference>
<dbReference type="InterPro" id="IPR013694">
    <property type="entry name" value="VIT"/>
</dbReference>
<dbReference type="InterPro" id="IPR002035">
    <property type="entry name" value="VWF_A"/>
</dbReference>
<dbReference type="InterPro" id="IPR036465">
    <property type="entry name" value="vWFA_dom_sf"/>
</dbReference>
<dbReference type="PANTHER" id="PTHR10338">
    <property type="entry name" value="INTER-ALPHA-TRYPSIN INHIBITOR HEAVY CHAIN FAMILY MEMBER"/>
    <property type="match status" value="1"/>
</dbReference>
<dbReference type="PANTHER" id="PTHR10338:SF106">
    <property type="entry name" value="INTER-ALPHA-TRYPSIN INHIBITOR HEAVY CHAIN H1"/>
    <property type="match status" value="1"/>
</dbReference>
<dbReference type="Pfam" id="PF06668">
    <property type="entry name" value="ITI_HC_C"/>
    <property type="match status" value="1"/>
</dbReference>
<dbReference type="Pfam" id="PF08487">
    <property type="entry name" value="VIT"/>
    <property type="match status" value="1"/>
</dbReference>
<dbReference type="Pfam" id="PF00092">
    <property type="entry name" value="VWA"/>
    <property type="match status" value="1"/>
</dbReference>
<dbReference type="SMART" id="SM00609">
    <property type="entry name" value="VIT"/>
    <property type="match status" value="1"/>
</dbReference>
<dbReference type="SMART" id="SM00327">
    <property type="entry name" value="VWA"/>
    <property type="match status" value="1"/>
</dbReference>
<dbReference type="SUPFAM" id="SSF53300">
    <property type="entry name" value="vWA-like"/>
    <property type="match status" value="1"/>
</dbReference>
<dbReference type="PROSITE" id="PS51468">
    <property type="entry name" value="VIT"/>
    <property type="match status" value="1"/>
</dbReference>
<dbReference type="PROSITE" id="PS50234">
    <property type="entry name" value="VWFA"/>
    <property type="match status" value="1"/>
</dbReference>
<gene>
    <name type="primary">ITIH1</name>
</gene>
<evidence type="ECO:0000250" key="1"/>
<evidence type="ECO:0000250" key="2">
    <source>
        <dbReference type="UniProtKB" id="P19827"/>
    </source>
</evidence>
<evidence type="ECO:0000255" key="3"/>
<evidence type="ECO:0000255" key="4">
    <source>
        <dbReference type="PROSITE-ProRule" id="PRU00219"/>
    </source>
</evidence>
<evidence type="ECO:0000255" key="5">
    <source>
        <dbReference type="PROSITE-ProRule" id="PRU00801"/>
    </source>
</evidence>
<evidence type="ECO:0000269" key="6">
    <source>
    </source>
</evidence>
<evidence type="ECO:0000305" key="7"/>
<accession>Q0VCM5</accession>
<sequence>MGLRGLLCVCLVSLLALQAVAAQGSPTRNPKGGKKRMAVDAAVDGVVIRSLKVNCKVTSRFAHYIITSQVVNSADTAKEVSFNVEIPKTAFISDFAITADENAFTGDIKDKVTAWKQYRKAAISGENAGLVRASGRTMEQFSIHIIVGPRSKATFRLTYEEVLRRKLMQYDIVIKVKPQQLVQHFEIDVDIFEPQGIRKLDVEASFLPKELAAQLIKKSFSGKKGHVLFRPTVSQQQTCPTCSTTLLNGDFKVTYDVNRDDACDLLVANNYFAHFFAPQNLKKLNKNVVFVIDISSSMEGQKLKQTKEALHKILGDMRPGDYFDLVLFGSAVQSWKGSLVQASPANLEAARNFVQQFSLAGATNLNGGLLRGIEILNKAQQSLPELSNHASILIMLTDGEPTEGVMDRTQILKNVRDGIKGRFPLYNLGFGHDVDLNFLEVMSLENNGRVQRIYEDHDATQQLQGFYEQVANPLLRDVELLYPREAVSDLTQHRHKQYYEGSEIMVAGRIADHKLSSFKADVRAHGEGQEFMTTCLVDKEEMKKLLRERGHMLENHVERLWAYLTIQELLAKRMKLEGQEKANVSAKALQMSLAYQFVTPLTSMTVRGMTDQDGLEPIIDKPLDDYLPLEMVGPRKTFMLQASQPAPTHSSLDIKKLPDQVTGVDTDPHFLIHVPQKEDTLCFNINEEPGVVLSLVQDPDTGFSVNGQLIGNEAGSPGKHEGTYFGRLGIANPATDFQLEVTPQNITLNPGSGGPVFSWRDQAFLRQNEVLVTINRKRNLVVSVEDGGTFEVVLHRVWRGSAVRQDFLGFYVLDSHRMSARTHGLLGQFFHPFDYKVSNLHPGSDPTKTDATMVVKNRRLTVTRGLQKDYRKDPRHGAEVTCWFIHNNGDGLIDGIHTDYIVPDIF</sequence>
<name>ITIH1_BOVIN</name>
<reference key="1">
    <citation type="submission" date="2006-08" db="EMBL/GenBank/DDBJ databases">
        <authorList>
            <consortium name="NIH - Mammalian Gene Collection (MGC) project"/>
        </authorList>
    </citation>
    <scope>NUCLEOTIDE SEQUENCE [LARGE SCALE MRNA]</scope>
    <source>
        <strain>Hereford</strain>
        <tissue>Fetal liver</tissue>
    </source>
</reference>
<reference key="2">
    <citation type="journal article" date="2009" name="Mol. Cell. Proteomics">
        <title>Affinity enrichment and characterization of mucin core-1 type glycopeptides from bovine serum.</title>
        <authorList>
            <person name="Darula Z."/>
            <person name="Medzihradszky K.F."/>
        </authorList>
    </citation>
    <scope>GLYCOSYLATION AT SER-643 AND THR-648</scope>
    <scope>IDENTIFICATION BY MASS SPECTROMETRY</scope>
</reference>
<comment type="function">
    <text evidence="1">May act as a carrier of hyaluronan in serum or as a binding protein between hyaluronan and other matrix protein, including those on cell surfaces in tissues to regulate the localization, synthesis and degradation of hyaluronan which are essential to cells undergoing biological processes.</text>
</comment>
<comment type="subunit">
    <text evidence="2">I-alpha-I plasma protease inhibitors are assembled from one or two heavy chains (HC) and one light chain, bikunin. Inter-alpha-inhibitor (I-alpha-I) is composed of ITIH1/HC1, ITIH2/HC2 and bikunin. Interacts with TNFAIP6 (via Link and CUB domains).</text>
</comment>
<comment type="subcellular location">
    <subcellularLocation>
        <location evidence="1">Secreted</location>
    </subcellularLocation>
</comment>
<comment type="PTM">
    <text evidence="1">Heavy chains are linked to bikunin via chondroitin 4-sulfate esterified to the alpha-carboxyl of the C-terminal aspartate after propeptide cleavage.</text>
</comment>
<comment type="PTM">
    <text evidence="1">The S-linked glycan is composed of two 6-carbon sugars, possibly Glc or Gal.</text>
</comment>
<comment type="similarity">
    <text evidence="7">Belongs to the ITIH family.</text>
</comment>